<reference key="1">
    <citation type="journal article" date="2004" name="Nature">
        <title>Genome evolution in yeasts.</title>
        <authorList>
            <person name="Dujon B."/>
            <person name="Sherman D."/>
            <person name="Fischer G."/>
            <person name="Durrens P."/>
            <person name="Casaregola S."/>
            <person name="Lafontaine I."/>
            <person name="de Montigny J."/>
            <person name="Marck C."/>
            <person name="Neuveglise C."/>
            <person name="Talla E."/>
            <person name="Goffard N."/>
            <person name="Frangeul L."/>
            <person name="Aigle M."/>
            <person name="Anthouard V."/>
            <person name="Babour A."/>
            <person name="Barbe V."/>
            <person name="Barnay S."/>
            <person name="Blanchin S."/>
            <person name="Beckerich J.-M."/>
            <person name="Beyne E."/>
            <person name="Bleykasten C."/>
            <person name="Boisrame A."/>
            <person name="Boyer J."/>
            <person name="Cattolico L."/>
            <person name="Confanioleri F."/>
            <person name="de Daruvar A."/>
            <person name="Despons L."/>
            <person name="Fabre E."/>
            <person name="Fairhead C."/>
            <person name="Ferry-Dumazet H."/>
            <person name="Groppi A."/>
            <person name="Hantraye F."/>
            <person name="Hennequin C."/>
            <person name="Jauniaux N."/>
            <person name="Joyet P."/>
            <person name="Kachouri R."/>
            <person name="Kerrest A."/>
            <person name="Koszul R."/>
            <person name="Lemaire M."/>
            <person name="Lesur I."/>
            <person name="Ma L."/>
            <person name="Muller H."/>
            <person name="Nicaud J.-M."/>
            <person name="Nikolski M."/>
            <person name="Oztas S."/>
            <person name="Ozier-Kalogeropoulos O."/>
            <person name="Pellenz S."/>
            <person name="Potier S."/>
            <person name="Richard G.-F."/>
            <person name="Straub M.-L."/>
            <person name="Suleau A."/>
            <person name="Swennen D."/>
            <person name="Tekaia F."/>
            <person name="Wesolowski-Louvel M."/>
            <person name="Westhof E."/>
            <person name="Wirth B."/>
            <person name="Zeniou-Meyer M."/>
            <person name="Zivanovic Y."/>
            <person name="Bolotin-Fukuhara M."/>
            <person name="Thierry A."/>
            <person name="Bouchier C."/>
            <person name="Caudron B."/>
            <person name="Scarpelli C."/>
            <person name="Gaillardin C."/>
            <person name="Weissenbach J."/>
            <person name="Wincker P."/>
            <person name="Souciet J.-L."/>
        </authorList>
    </citation>
    <scope>NUCLEOTIDE SEQUENCE [LARGE SCALE GENOMIC DNA]</scope>
    <source>
        <strain>ATCC 2001 / BCRC 20586 / JCM 3761 / NBRC 0622 / NRRL Y-65 / CBS 138</strain>
    </source>
</reference>
<protein>
    <recommendedName>
        <fullName>Golgi apparatus membrane protein TVP23</fullName>
    </recommendedName>
</protein>
<sequence length="196" mass="22505">MDHVRNFYDTILRSSHPLLMAFHLAGKAAPLAFYIAGFLFPSFTALFITIVLLLAADFYFTKNISGRRLVQLRWWYDSSATSTETFTFESHKQYTAGPPINPIDSKLFWWSMYLTPAIWFVLGILAILRLKLITFILIAVATCMTGWNTYGFRCCDRWNPNNSQSTEPFFQLPSIPGLDNITRLARFQSFFQSAAN</sequence>
<comment type="function">
    <text evidence="1">Golgi membrane protein involved in vesicular trafficking.</text>
</comment>
<comment type="subcellular location">
    <subcellularLocation>
        <location evidence="1">Golgi apparatus membrane</location>
        <topology evidence="1">Multi-pass membrane protein</topology>
    </subcellularLocation>
</comment>
<comment type="similarity">
    <text evidence="3">Belongs to the TVP23 family.</text>
</comment>
<accession>Q6FM91</accession>
<organism>
    <name type="scientific">Candida glabrata (strain ATCC 2001 / BCRC 20586 / JCM 3761 / NBRC 0622 / NRRL Y-65 / CBS 138)</name>
    <name type="common">Yeast</name>
    <name type="synonym">Nakaseomyces glabratus</name>
    <dbReference type="NCBI Taxonomy" id="284593"/>
    <lineage>
        <taxon>Eukaryota</taxon>
        <taxon>Fungi</taxon>
        <taxon>Dikarya</taxon>
        <taxon>Ascomycota</taxon>
        <taxon>Saccharomycotina</taxon>
        <taxon>Saccharomycetes</taxon>
        <taxon>Saccharomycetales</taxon>
        <taxon>Saccharomycetaceae</taxon>
        <taxon>Nakaseomyces</taxon>
    </lineage>
</organism>
<dbReference type="EMBL" id="CR380957">
    <property type="protein sequence ID" value="CAG61616.1"/>
    <property type="molecule type" value="Genomic_DNA"/>
</dbReference>
<dbReference type="RefSeq" id="XP_448653.1">
    <property type="nucleotide sequence ID" value="XM_448653.1"/>
</dbReference>
<dbReference type="FunCoup" id="Q6FM91">
    <property type="interactions" value="420"/>
</dbReference>
<dbReference type="STRING" id="284593.Q6FM91"/>
<dbReference type="GlyCosmos" id="Q6FM91">
    <property type="glycosylation" value="3 sites, No reported glycans"/>
</dbReference>
<dbReference type="EnsemblFungi" id="CAGL0K09988g-T">
    <property type="protein sequence ID" value="CAGL0K09988g-T-p1"/>
    <property type="gene ID" value="CAGL0K09988g"/>
</dbReference>
<dbReference type="KEGG" id="cgr:2890209"/>
<dbReference type="CGD" id="CAL0134729">
    <property type="gene designation" value="CAGL0K09988g"/>
</dbReference>
<dbReference type="VEuPathDB" id="FungiDB:B1J91_K09988g"/>
<dbReference type="VEuPathDB" id="FungiDB:CAGL0K09988g"/>
<dbReference type="eggNOG" id="KOG3195">
    <property type="taxonomic scope" value="Eukaryota"/>
</dbReference>
<dbReference type="HOGENOM" id="CLU_1190470_0_0_1"/>
<dbReference type="InParanoid" id="Q6FM91"/>
<dbReference type="OMA" id="KMIWWID"/>
<dbReference type="Proteomes" id="UP000002428">
    <property type="component" value="Chromosome K"/>
</dbReference>
<dbReference type="GO" id="GO:0000139">
    <property type="term" value="C:Golgi membrane"/>
    <property type="evidence" value="ECO:0007669"/>
    <property type="project" value="UniProtKB-SubCell"/>
</dbReference>
<dbReference type="GO" id="GO:0009306">
    <property type="term" value="P:protein secretion"/>
    <property type="evidence" value="ECO:0007669"/>
    <property type="project" value="TreeGrafter"/>
</dbReference>
<dbReference type="GO" id="GO:0016192">
    <property type="term" value="P:vesicle-mediated transport"/>
    <property type="evidence" value="ECO:0007669"/>
    <property type="project" value="EnsemblFungi"/>
</dbReference>
<dbReference type="InterPro" id="IPR008564">
    <property type="entry name" value="TVP23-like"/>
</dbReference>
<dbReference type="PANTHER" id="PTHR13019">
    <property type="entry name" value="GOLGI APPARATUS MEMBRANE PROTEIN TVP23"/>
    <property type="match status" value="1"/>
</dbReference>
<dbReference type="PANTHER" id="PTHR13019:SF7">
    <property type="entry name" value="GOLGI APPARATUS MEMBRANE PROTEIN TVP23"/>
    <property type="match status" value="1"/>
</dbReference>
<dbReference type="Pfam" id="PF05832">
    <property type="entry name" value="DUF846"/>
    <property type="match status" value="1"/>
</dbReference>
<proteinExistence type="inferred from homology"/>
<evidence type="ECO:0000250" key="1"/>
<evidence type="ECO:0000255" key="2"/>
<evidence type="ECO:0000305" key="3"/>
<name>TVP23_CANGA</name>
<keyword id="KW-0325">Glycoprotein</keyword>
<keyword id="KW-0333">Golgi apparatus</keyword>
<keyword id="KW-0472">Membrane</keyword>
<keyword id="KW-1185">Reference proteome</keyword>
<keyword id="KW-0812">Transmembrane</keyword>
<keyword id="KW-1133">Transmembrane helix</keyword>
<gene>
    <name type="primary">TVP23</name>
    <name type="ordered locus">CAGL0K09988g</name>
</gene>
<feature type="chain" id="PRO_0000343043" description="Golgi apparatus membrane protein TVP23">
    <location>
        <begin position="1"/>
        <end position="196"/>
    </location>
</feature>
<feature type="transmembrane region" description="Helical" evidence="2">
    <location>
        <begin position="18"/>
        <end position="36"/>
    </location>
</feature>
<feature type="transmembrane region" description="Helical" evidence="2">
    <location>
        <begin position="43"/>
        <end position="60"/>
    </location>
</feature>
<feature type="transmembrane region" description="Helical" evidence="2">
    <location>
        <begin position="107"/>
        <end position="127"/>
    </location>
</feature>
<feature type="transmembrane region" description="Helical" evidence="2">
    <location>
        <begin position="132"/>
        <end position="152"/>
    </location>
</feature>
<feature type="glycosylation site" description="N-linked (GlcNAc...) asparagine" evidence="2">
    <location>
        <position position="63"/>
    </location>
</feature>
<feature type="glycosylation site" description="N-linked (GlcNAc...) asparagine" evidence="2">
    <location>
        <position position="161"/>
    </location>
</feature>
<feature type="glycosylation site" description="N-linked (GlcNAc...) asparagine" evidence="2">
    <location>
        <position position="180"/>
    </location>
</feature>